<comment type="function">
    <text evidence="1">RNA chaperone that binds small regulatory RNA (sRNAs) and mRNAs to facilitate mRNA translational regulation in response to envelope stress, environmental stress and changes in metabolite concentrations. Also binds with high specificity to tRNAs.</text>
</comment>
<comment type="subunit">
    <text evidence="1">Homohexamer.</text>
</comment>
<comment type="similarity">
    <text evidence="1">Belongs to the Hfq family.</text>
</comment>
<sequence length="82" mass="9167">MAADRAQNLQDTFLNHVRKTKTPLTIFLVNGVKLQGIVTWFDNFCLLLRRDGHSQLVYKHAISTIMPGAPIQLFEGGEDSPA</sequence>
<organism>
    <name type="scientific">Rhodopseudomonas palustris (strain HaA2)</name>
    <dbReference type="NCBI Taxonomy" id="316058"/>
    <lineage>
        <taxon>Bacteria</taxon>
        <taxon>Pseudomonadati</taxon>
        <taxon>Pseudomonadota</taxon>
        <taxon>Alphaproteobacteria</taxon>
        <taxon>Hyphomicrobiales</taxon>
        <taxon>Nitrobacteraceae</taxon>
        <taxon>Rhodopseudomonas</taxon>
    </lineage>
</organism>
<accession>Q2IW30</accession>
<reference key="1">
    <citation type="submission" date="2006-01" db="EMBL/GenBank/DDBJ databases">
        <title>Complete sequence of Rhodopseudomonas palustris HaA2.</title>
        <authorList>
            <consortium name="US DOE Joint Genome Institute"/>
            <person name="Copeland A."/>
            <person name="Lucas S."/>
            <person name="Lapidus A."/>
            <person name="Barry K."/>
            <person name="Detter J.C."/>
            <person name="Glavina T."/>
            <person name="Hammon N."/>
            <person name="Israni S."/>
            <person name="Pitluck S."/>
            <person name="Chain P."/>
            <person name="Malfatti S."/>
            <person name="Shin M."/>
            <person name="Vergez L."/>
            <person name="Schmutz J."/>
            <person name="Larimer F."/>
            <person name="Land M."/>
            <person name="Hauser L."/>
            <person name="Pelletier D.A."/>
            <person name="Kyrpides N."/>
            <person name="Anderson I."/>
            <person name="Oda Y."/>
            <person name="Harwood C.S."/>
            <person name="Richardson P."/>
        </authorList>
    </citation>
    <scope>NUCLEOTIDE SEQUENCE [LARGE SCALE GENOMIC DNA]</scope>
    <source>
        <strain>HaA2</strain>
    </source>
</reference>
<proteinExistence type="inferred from homology"/>
<evidence type="ECO:0000255" key="1">
    <source>
        <dbReference type="HAMAP-Rule" id="MF_00436"/>
    </source>
</evidence>
<evidence type="ECO:0000255" key="2">
    <source>
        <dbReference type="PROSITE-ProRule" id="PRU01346"/>
    </source>
</evidence>
<protein>
    <recommendedName>
        <fullName evidence="1">RNA-binding protein Hfq</fullName>
    </recommendedName>
</protein>
<dbReference type="EMBL" id="CP000250">
    <property type="protein sequence ID" value="ABD07580.1"/>
    <property type="molecule type" value="Genomic_DNA"/>
</dbReference>
<dbReference type="RefSeq" id="WP_002711839.1">
    <property type="nucleotide sequence ID" value="NC_007778.1"/>
</dbReference>
<dbReference type="SMR" id="Q2IW30"/>
<dbReference type="STRING" id="316058.RPB_2878"/>
<dbReference type="KEGG" id="rpb:RPB_2878"/>
<dbReference type="eggNOG" id="COG1923">
    <property type="taxonomic scope" value="Bacteria"/>
</dbReference>
<dbReference type="HOGENOM" id="CLU_113688_0_0_5"/>
<dbReference type="OrthoDB" id="9799751at2"/>
<dbReference type="Proteomes" id="UP000008809">
    <property type="component" value="Chromosome"/>
</dbReference>
<dbReference type="GO" id="GO:0005829">
    <property type="term" value="C:cytosol"/>
    <property type="evidence" value="ECO:0007669"/>
    <property type="project" value="TreeGrafter"/>
</dbReference>
<dbReference type="GO" id="GO:0003723">
    <property type="term" value="F:RNA binding"/>
    <property type="evidence" value="ECO:0007669"/>
    <property type="project" value="UniProtKB-UniRule"/>
</dbReference>
<dbReference type="GO" id="GO:0006355">
    <property type="term" value="P:regulation of DNA-templated transcription"/>
    <property type="evidence" value="ECO:0007669"/>
    <property type="project" value="InterPro"/>
</dbReference>
<dbReference type="GO" id="GO:0043487">
    <property type="term" value="P:regulation of RNA stability"/>
    <property type="evidence" value="ECO:0007669"/>
    <property type="project" value="TreeGrafter"/>
</dbReference>
<dbReference type="GO" id="GO:0045974">
    <property type="term" value="P:regulation of translation, ncRNA-mediated"/>
    <property type="evidence" value="ECO:0007669"/>
    <property type="project" value="TreeGrafter"/>
</dbReference>
<dbReference type="CDD" id="cd01716">
    <property type="entry name" value="Hfq"/>
    <property type="match status" value="1"/>
</dbReference>
<dbReference type="FunFam" id="2.30.30.100:FF:000001">
    <property type="entry name" value="RNA-binding protein Hfq"/>
    <property type="match status" value="1"/>
</dbReference>
<dbReference type="Gene3D" id="2.30.30.100">
    <property type="match status" value="1"/>
</dbReference>
<dbReference type="HAMAP" id="MF_00436">
    <property type="entry name" value="Hfq"/>
    <property type="match status" value="1"/>
</dbReference>
<dbReference type="InterPro" id="IPR005001">
    <property type="entry name" value="Hfq"/>
</dbReference>
<dbReference type="InterPro" id="IPR010920">
    <property type="entry name" value="LSM_dom_sf"/>
</dbReference>
<dbReference type="InterPro" id="IPR047575">
    <property type="entry name" value="Sm"/>
</dbReference>
<dbReference type="NCBIfam" id="TIGR02383">
    <property type="entry name" value="Hfq"/>
    <property type="match status" value="1"/>
</dbReference>
<dbReference type="NCBIfam" id="NF001602">
    <property type="entry name" value="PRK00395.1"/>
    <property type="match status" value="1"/>
</dbReference>
<dbReference type="PANTHER" id="PTHR34772">
    <property type="entry name" value="RNA-BINDING PROTEIN HFQ"/>
    <property type="match status" value="1"/>
</dbReference>
<dbReference type="PANTHER" id="PTHR34772:SF1">
    <property type="entry name" value="RNA-BINDING PROTEIN HFQ"/>
    <property type="match status" value="1"/>
</dbReference>
<dbReference type="Pfam" id="PF17209">
    <property type="entry name" value="Hfq"/>
    <property type="match status" value="1"/>
</dbReference>
<dbReference type="SUPFAM" id="SSF50182">
    <property type="entry name" value="Sm-like ribonucleoproteins"/>
    <property type="match status" value="1"/>
</dbReference>
<dbReference type="PROSITE" id="PS52002">
    <property type="entry name" value="SM"/>
    <property type="match status" value="1"/>
</dbReference>
<feature type="chain" id="PRO_1000080678" description="RNA-binding protein Hfq">
    <location>
        <begin position="1"/>
        <end position="82"/>
    </location>
</feature>
<feature type="domain" description="Sm" evidence="2">
    <location>
        <begin position="11"/>
        <end position="71"/>
    </location>
</feature>
<name>HFQ_RHOP2</name>
<keyword id="KW-1185">Reference proteome</keyword>
<keyword id="KW-0694">RNA-binding</keyword>
<keyword id="KW-0346">Stress response</keyword>
<gene>
    <name evidence="1" type="primary">hfq</name>
    <name type="ordered locus">RPB_2878</name>
</gene>